<sequence>MARLLQASCLLSLLLAGFLPQSRGQDKSKMDCHGGVSGTIYEYGALTIDGEEYIPFKQYIGKYVLFVNVASYUGLTGQYIELNALQEELAPFGLVLLGFPCNQFGKQEPGENSEILPSLKYVRPGGGFVPNFQLFEKGDVNGEKEQKFYTFLKNSCPPTSELLGTSDRLFWEPMKVHDIRWNFEKFLVGPDGIPVMRWHHRTTISNVKMDILSYMRRQAALGVKRK</sequence>
<evidence type="ECO:0000250" key="1"/>
<evidence type="ECO:0000250" key="2">
    <source>
        <dbReference type="UniProtKB" id="P22352"/>
    </source>
</evidence>
<evidence type="ECO:0000255" key="3"/>
<evidence type="ECO:0000269" key="4">
    <source>
    </source>
</evidence>
<evidence type="ECO:0000305" key="5"/>
<reference key="1">
    <citation type="journal article" date="2005" name="Comp. Biochem. Physiol.">
        <title>Structure, gene expression, and evolution of primate glutathione peroxidases.</title>
        <authorList>
            <person name="Fukuhara R."/>
            <person name="Kageyama T."/>
        </authorList>
    </citation>
    <scope>NUCLEOTIDE SEQUENCE [MRNA]</scope>
    <scope>TISSUE SPECIFICITY</scope>
</reference>
<keyword id="KW-0560">Oxidoreductase</keyword>
<keyword id="KW-0575">Peroxidase</keyword>
<keyword id="KW-0964">Secreted</keyword>
<keyword id="KW-0712">Selenocysteine</keyword>
<keyword id="KW-0732">Signal</keyword>
<feature type="signal peptide" evidence="3">
    <location>
        <begin position="1"/>
        <end position="24"/>
    </location>
</feature>
<feature type="chain" id="PRO_0000042606" description="Glutathione peroxidase 3">
    <location>
        <begin position="25"/>
        <end position="226"/>
    </location>
</feature>
<feature type="active site" evidence="1">
    <location>
        <position position="73"/>
    </location>
</feature>
<feature type="non-standard amino acid" description="Selenocysteine">
    <location>
        <position position="73"/>
    </location>
</feature>
<gene>
    <name evidence="2" type="primary">GPX3</name>
</gene>
<proteinExistence type="evidence at transcript level"/>
<comment type="function">
    <text evidence="2">Protects cells and enzymes from oxidative damage, by catalyzing the reduction of hydrogen peroxide, lipid peroxides and organic hydroperoxide, by glutathione.</text>
</comment>
<comment type="catalytic activity">
    <reaction evidence="2">
        <text>2 glutathione + H2O2 = glutathione disulfide + 2 H2O</text>
        <dbReference type="Rhea" id="RHEA:16833"/>
        <dbReference type="ChEBI" id="CHEBI:15377"/>
        <dbReference type="ChEBI" id="CHEBI:16240"/>
        <dbReference type="ChEBI" id="CHEBI:57925"/>
        <dbReference type="ChEBI" id="CHEBI:58297"/>
        <dbReference type="EC" id="1.11.1.9"/>
    </reaction>
</comment>
<comment type="catalytic activity">
    <reaction evidence="2">
        <text>tert-butyl hydroperoxide + 2 glutathione = tert-butanol + glutathione disulfide + H2O</text>
        <dbReference type="Rhea" id="RHEA:69412"/>
        <dbReference type="ChEBI" id="CHEBI:15377"/>
        <dbReference type="ChEBI" id="CHEBI:45895"/>
        <dbReference type="ChEBI" id="CHEBI:57925"/>
        <dbReference type="ChEBI" id="CHEBI:58297"/>
        <dbReference type="ChEBI" id="CHEBI:64090"/>
    </reaction>
</comment>
<comment type="subunit">
    <text evidence="1">Homotetramer.</text>
</comment>
<comment type="subcellular location">
    <subcellularLocation>
        <location evidence="1">Secreted</location>
    </subcellularLocation>
</comment>
<comment type="tissue specificity">
    <text evidence="4">Expressed intensively in the kidney and adrenal gland, and weakly in the cerebellum, heart, and lung. Secreted in plasma.</text>
</comment>
<comment type="similarity">
    <text evidence="5">Belongs to the glutathione peroxidase family.</text>
</comment>
<dbReference type="EC" id="1.11.1.9" evidence="2"/>
<dbReference type="EMBL" id="AB121008">
    <property type="protein sequence ID" value="BAE17016.1"/>
    <property type="molecule type" value="mRNA"/>
</dbReference>
<dbReference type="PeroxiBase" id="3706">
    <property type="entry name" value="MfGPx03"/>
</dbReference>
<dbReference type="GO" id="GO:0005615">
    <property type="term" value="C:extracellular space"/>
    <property type="evidence" value="ECO:0000250"/>
    <property type="project" value="UniProtKB"/>
</dbReference>
<dbReference type="GO" id="GO:0004602">
    <property type="term" value="F:glutathione peroxidase activity"/>
    <property type="evidence" value="ECO:0000250"/>
    <property type="project" value="UniProtKB"/>
</dbReference>
<dbReference type="GO" id="GO:0042802">
    <property type="term" value="F:identical protein binding"/>
    <property type="evidence" value="ECO:0000250"/>
    <property type="project" value="UniProtKB"/>
</dbReference>
<dbReference type="GO" id="GO:0008430">
    <property type="term" value="F:selenium binding"/>
    <property type="evidence" value="ECO:0000250"/>
    <property type="project" value="UniProtKB"/>
</dbReference>
<dbReference type="GO" id="GO:0042744">
    <property type="term" value="P:hydrogen peroxide catabolic process"/>
    <property type="evidence" value="ECO:0007669"/>
    <property type="project" value="TreeGrafter"/>
</dbReference>
<dbReference type="GO" id="GO:0006979">
    <property type="term" value="P:response to oxidative stress"/>
    <property type="evidence" value="ECO:0007669"/>
    <property type="project" value="InterPro"/>
</dbReference>
<dbReference type="CDD" id="cd00340">
    <property type="entry name" value="GSH_Peroxidase"/>
    <property type="match status" value="1"/>
</dbReference>
<dbReference type="FunFam" id="3.40.30.10:FF:000112">
    <property type="entry name" value="Glutathione peroxidase"/>
    <property type="match status" value="1"/>
</dbReference>
<dbReference type="Gene3D" id="3.40.30.10">
    <property type="entry name" value="Glutaredoxin"/>
    <property type="match status" value="1"/>
</dbReference>
<dbReference type="InterPro" id="IPR000889">
    <property type="entry name" value="Glutathione_peroxidase"/>
</dbReference>
<dbReference type="InterPro" id="IPR029759">
    <property type="entry name" value="GPX_AS"/>
</dbReference>
<dbReference type="InterPro" id="IPR029760">
    <property type="entry name" value="GPX_CS"/>
</dbReference>
<dbReference type="InterPro" id="IPR036249">
    <property type="entry name" value="Thioredoxin-like_sf"/>
</dbReference>
<dbReference type="PANTHER" id="PTHR11592">
    <property type="entry name" value="GLUTATHIONE PEROXIDASE"/>
    <property type="match status" value="1"/>
</dbReference>
<dbReference type="PANTHER" id="PTHR11592:SF32">
    <property type="entry name" value="GLUTATHIONE PEROXIDASE 3"/>
    <property type="match status" value="1"/>
</dbReference>
<dbReference type="Pfam" id="PF00255">
    <property type="entry name" value="GSHPx"/>
    <property type="match status" value="1"/>
</dbReference>
<dbReference type="PIRSF" id="PIRSF000303">
    <property type="entry name" value="Glutathion_perox"/>
    <property type="match status" value="1"/>
</dbReference>
<dbReference type="PRINTS" id="PR01011">
    <property type="entry name" value="GLUTPROXDASE"/>
</dbReference>
<dbReference type="SUPFAM" id="SSF52833">
    <property type="entry name" value="Thioredoxin-like"/>
    <property type="match status" value="1"/>
</dbReference>
<dbReference type="PROSITE" id="PS00460">
    <property type="entry name" value="GLUTATHIONE_PEROXID_1"/>
    <property type="match status" value="1"/>
</dbReference>
<dbReference type="PROSITE" id="PS00763">
    <property type="entry name" value="GLUTATHIONE_PEROXID_2"/>
    <property type="match status" value="1"/>
</dbReference>
<dbReference type="PROSITE" id="PS51355">
    <property type="entry name" value="GLUTATHIONE_PEROXID_3"/>
    <property type="match status" value="1"/>
</dbReference>
<organism>
    <name type="scientific">Macaca fuscata fuscata</name>
    <name type="common">Japanese macaque</name>
    <dbReference type="NCBI Taxonomy" id="9543"/>
    <lineage>
        <taxon>Eukaryota</taxon>
        <taxon>Metazoa</taxon>
        <taxon>Chordata</taxon>
        <taxon>Craniata</taxon>
        <taxon>Vertebrata</taxon>
        <taxon>Euteleostomi</taxon>
        <taxon>Mammalia</taxon>
        <taxon>Eutheria</taxon>
        <taxon>Euarchontoglires</taxon>
        <taxon>Primates</taxon>
        <taxon>Haplorrhini</taxon>
        <taxon>Catarrhini</taxon>
        <taxon>Cercopithecidae</taxon>
        <taxon>Cercopithecinae</taxon>
        <taxon>Macaca</taxon>
    </lineage>
</organism>
<name>GPX3_MACFU</name>
<protein>
    <recommendedName>
        <fullName evidence="2">Glutathione peroxidase 3</fullName>
        <shortName>GPx-3</shortName>
        <shortName>GSHPx-3</shortName>
        <ecNumber evidence="2">1.11.1.9</ecNumber>
    </recommendedName>
    <alternativeName>
        <fullName>Plasma glutathione peroxidase</fullName>
        <shortName>GPx-P</shortName>
        <shortName>GSHPx-P</shortName>
    </alternativeName>
</protein>
<accession>Q4AEH4</accession>